<feature type="chain" id="PRO_1000100110" description="Shikimate dehydrogenase (NADP(+))">
    <location>
        <begin position="1"/>
        <end position="272"/>
    </location>
</feature>
<feature type="active site" description="Proton acceptor" evidence="1">
    <location>
        <position position="65"/>
    </location>
</feature>
<feature type="binding site" evidence="1">
    <location>
        <begin position="14"/>
        <end position="16"/>
    </location>
    <ligand>
        <name>shikimate</name>
        <dbReference type="ChEBI" id="CHEBI:36208"/>
    </ligand>
</feature>
<feature type="binding site" evidence="1">
    <location>
        <position position="61"/>
    </location>
    <ligand>
        <name>shikimate</name>
        <dbReference type="ChEBI" id="CHEBI:36208"/>
    </ligand>
</feature>
<feature type="binding site" evidence="1">
    <location>
        <position position="102"/>
    </location>
    <ligand>
        <name>shikimate</name>
        <dbReference type="ChEBI" id="CHEBI:36208"/>
    </ligand>
</feature>
<feature type="binding site" evidence="1">
    <location>
        <begin position="127"/>
        <end position="131"/>
    </location>
    <ligand>
        <name>NADP(+)</name>
        <dbReference type="ChEBI" id="CHEBI:58349"/>
    </ligand>
</feature>
<feature type="binding site" evidence="1">
    <location>
        <begin position="151"/>
        <end position="156"/>
    </location>
    <ligand>
        <name>NADP(+)</name>
        <dbReference type="ChEBI" id="CHEBI:58349"/>
    </ligand>
</feature>
<feature type="binding site" evidence="1">
    <location>
        <position position="215"/>
    </location>
    <ligand>
        <name>NADP(+)</name>
        <dbReference type="ChEBI" id="CHEBI:58349"/>
    </ligand>
</feature>
<feature type="binding site" evidence="1">
    <location>
        <position position="217"/>
    </location>
    <ligand>
        <name>shikimate</name>
        <dbReference type="ChEBI" id="CHEBI:36208"/>
    </ligand>
</feature>
<feature type="binding site" evidence="1">
    <location>
        <position position="239"/>
    </location>
    <ligand>
        <name>NADP(+)</name>
        <dbReference type="ChEBI" id="CHEBI:58349"/>
    </ligand>
</feature>
<sequence>MDKYAVIGNPVEHSLSPVIFQAFEKQTNHSFDYLKIKAPVNGFAAAVKKFHDEGGKGANITLPFKEEAYQLADKRCQEANEAHAASALQFREDGTIYAVNYDGLGLVQDLTRNHNITLTQKSILIVGAGGATRGILGPLLNAAPEKIVIVNRTPSKAHALAKIFHLRGEIQGGGFDELEPMRYDVIIHATSLGHQGKFPPLPDGLVGSQSCCYDLSYGKIASPFLQWAKDQGAKYNFDGLGMLVEHNAAVFYLWFGIYPDTNPVIEMLQAHL</sequence>
<name>AROE_COXB1</name>
<dbReference type="EC" id="1.1.1.25" evidence="1"/>
<dbReference type="EMBL" id="CP001020">
    <property type="protein sequence ID" value="ACJ19514.1"/>
    <property type="molecule type" value="Genomic_DNA"/>
</dbReference>
<dbReference type="RefSeq" id="WP_005770326.1">
    <property type="nucleotide sequence ID" value="NC_011528.1"/>
</dbReference>
<dbReference type="SMR" id="B6J4B0"/>
<dbReference type="KEGG" id="cbc:CbuK_0199"/>
<dbReference type="HOGENOM" id="CLU_044063_2_1_6"/>
<dbReference type="UniPathway" id="UPA00053">
    <property type="reaction ID" value="UER00087"/>
</dbReference>
<dbReference type="GO" id="GO:0005829">
    <property type="term" value="C:cytosol"/>
    <property type="evidence" value="ECO:0007669"/>
    <property type="project" value="TreeGrafter"/>
</dbReference>
<dbReference type="GO" id="GO:0050661">
    <property type="term" value="F:NADP binding"/>
    <property type="evidence" value="ECO:0007669"/>
    <property type="project" value="InterPro"/>
</dbReference>
<dbReference type="GO" id="GO:0004764">
    <property type="term" value="F:shikimate 3-dehydrogenase (NADP+) activity"/>
    <property type="evidence" value="ECO:0007669"/>
    <property type="project" value="UniProtKB-UniRule"/>
</dbReference>
<dbReference type="GO" id="GO:0008652">
    <property type="term" value="P:amino acid biosynthetic process"/>
    <property type="evidence" value="ECO:0007669"/>
    <property type="project" value="UniProtKB-KW"/>
</dbReference>
<dbReference type="GO" id="GO:0009073">
    <property type="term" value="P:aromatic amino acid family biosynthetic process"/>
    <property type="evidence" value="ECO:0007669"/>
    <property type="project" value="UniProtKB-KW"/>
</dbReference>
<dbReference type="GO" id="GO:0009423">
    <property type="term" value="P:chorismate biosynthetic process"/>
    <property type="evidence" value="ECO:0007669"/>
    <property type="project" value="UniProtKB-UniRule"/>
</dbReference>
<dbReference type="GO" id="GO:0019632">
    <property type="term" value="P:shikimate metabolic process"/>
    <property type="evidence" value="ECO:0007669"/>
    <property type="project" value="InterPro"/>
</dbReference>
<dbReference type="CDD" id="cd01065">
    <property type="entry name" value="NAD_bind_Shikimate_DH"/>
    <property type="match status" value="1"/>
</dbReference>
<dbReference type="FunFam" id="3.40.50.10860:FF:000006">
    <property type="entry name" value="Shikimate dehydrogenase (NADP(+))"/>
    <property type="match status" value="1"/>
</dbReference>
<dbReference type="FunFam" id="3.40.50.720:FF:000104">
    <property type="entry name" value="Shikimate dehydrogenase (NADP(+))"/>
    <property type="match status" value="1"/>
</dbReference>
<dbReference type="Gene3D" id="3.40.50.10860">
    <property type="entry name" value="Leucine Dehydrogenase, chain A, domain 1"/>
    <property type="match status" value="1"/>
</dbReference>
<dbReference type="Gene3D" id="3.40.50.720">
    <property type="entry name" value="NAD(P)-binding Rossmann-like Domain"/>
    <property type="match status" value="1"/>
</dbReference>
<dbReference type="HAMAP" id="MF_00222">
    <property type="entry name" value="Shikimate_DH_AroE"/>
    <property type="match status" value="1"/>
</dbReference>
<dbReference type="InterPro" id="IPR046346">
    <property type="entry name" value="Aminoacid_DH-like_N_sf"/>
</dbReference>
<dbReference type="InterPro" id="IPR036291">
    <property type="entry name" value="NAD(P)-bd_dom_sf"/>
</dbReference>
<dbReference type="InterPro" id="IPR011342">
    <property type="entry name" value="Shikimate_DH"/>
</dbReference>
<dbReference type="InterPro" id="IPR013708">
    <property type="entry name" value="Shikimate_DH-bd_N"/>
</dbReference>
<dbReference type="InterPro" id="IPR022893">
    <property type="entry name" value="Shikimate_DH_fam"/>
</dbReference>
<dbReference type="InterPro" id="IPR006151">
    <property type="entry name" value="Shikm_DH/Glu-tRNA_Rdtase"/>
</dbReference>
<dbReference type="NCBIfam" id="TIGR00507">
    <property type="entry name" value="aroE"/>
    <property type="match status" value="1"/>
</dbReference>
<dbReference type="NCBIfam" id="NF001310">
    <property type="entry name" value="PRK00258.1-2"/>
    <property type="match status" value="1"/>
</dbReference>
<dbReference type="PANTHER" id="PTHR21089:SF1">
    <property type="entry name" value="BIFUNCTIONAL 3-DEHYDROQUINATE DEHYDRATASE_SHIKIMATE DEHYDROGENASE, CHLOROPLASTIC"/>
    <property type="match status" value="1"/>
</dbReference>
<dbReference type="PANTHER" id="PTHR21089">
    <property type="entry name" value="SHIKIMATE DEHYDROGENASE"/>
    <property type="match status" value="1"/>
</dbReference>
<dbReference type="Pfam" id="PF01488">
    <property type="entry name" value="Shikimate_DH"/>
    <property type="match status" value="1"/>
</dbReference>
<dbReference type="Pfam" id="PF08501">
    <property type="entry name" value="Shikimate_dh_N"/>
    <property type="match status" value="1"/>
</dbReference>
<dbReference type="SUPFAM" id="SSF53223">
    <property type="entry name" value="Aminoacid dehydrogenase-like, N-terminal domain"/>
    <property type="match status" value="1"/>
</dbReference>
<dbReference type="SUPFAM" id="SSF51735">
    <property type="entry name" value="NAD(P)-binding Rossmann-fold domains"/>
    <property type="match status" value="1"/>
</dbReference>
<evidence type="ECO:0000255" key="1">
    <source>
        <dbReference type="HAMAP-Rule" id="MF_00222"/>
    </source>
</evidence>
<comment type="function">
    <text evidence="1">Involved in the biosynthesis of the chorismate, which leads to the biosynthesis of aromatic amino acids. Catalyzes the reversible NADPH linked reduction of 3-dehydroshikimate (DHSA) to yield shikimate (SA).</text>
</comment>
<comment type="catalytic activity">
    <reaction evidence="1">
        <text>shikimate + NADP(+) = 3-dehydroshikimate + NADPH + H(+)</text>
        <dbReference type="Rhea" id="RHEA:17737"/>
        <dbReference type="ChEBI" id="CHEBI:15378"/>
        <dbReference type="ChEBI" id="CHEBI:16630"/>
        <dbReference type="ChEBI" id="CHEBI:36208"/>
        <dbReference type="ChEBI" id="CHEBI:57783"/>
        <dbReference type="ChEBI" id="CHEBI:58349"/>
        <dbReference type="EC" id="1.1.1.25"/>
    </reaction>
</comment>
<comment type="pathway">
    <text evidence="1">Metabolic intermediate biosynthesis; chorismate biosynthesis; chorismate from D-erythrose 4-phosphate and phosphoenolpyruvate: step 4/7.</text>
</comment>
<comment type="subunit">
    <text evidence="1">Homodimer.</text>
</comment>
<comment type="similarity">
    <text evidence="1">Belongs to the shikimate dehydrogenase family.</text>
</comment>
<accession>B6J4B0</accession>
<reference key="1">
    <citation type="journal article" date="2009" name="Infect. Immun.">
        <title>Comparative genomics reveal extensive transposon-mediated genomic plasticity and diversity among potential effector proteins within the genus Coxiella.</title>
        <authorList>
            <person name="Beare P.A."/>
            <person name="Unsworth N."/>
            <person name="Andoh M."/>
            <person name="Voth D.E."/>
            <person name="Omsland A."/>
            <person name="Gilk S.D."/>
            <person name="Williams K.P."/>
            <person name="Sobral B.W."/>
            <person name="Kupko J.J. III"/>
            <person name="Porcella S.F."/>
            <person name="Samuel J.E."/>
            <person name="Heinzen R.A."/>
        </authorList>
    </citation>
    <scope>NUCLEOTIDE SEQUENCE [LARGE SCALE GENOMIC DNA]</scope>
    <source>
        <strain>CbuK_Q154</strain>
    </source>
</reference>
<organism>
    <name type="scientific">Coxiella burnetii (strain CbuK_Q154)</name>
    <name type="common">Coxiella burnetii (strain Q154)</name>
    <dbReference type="NCBI Taxonomy" id="434924"/>
    <lineage>
        <taxon>Bacteria</taxon>
        <taxon>Pseudomonadati</taxon>
        <taxon>Pseudomonadota</taxon>
        <taxon>Gammaproteobacteria</taxon>
        <taxon>Legionellales</taxon>
        <taxon>Coxiellaceae</taxon>
        <taxon>Coxiella</taxon>
    </lineage>
</organism>
<keyword id="KW-0028">Amino-acid biosynthesis</keyword>
<keyword id="KW-0057">Aromatic amino acid biosynthesis</keyword>
<keyword id="KW-0521">NADP</keyword>
<keyword id="KW-0560">Oxidoreductase</keyword>
<gene>
    <name evidence="1" type="primary">aroE</name>
    <name type="ordered locus">CbuK_0199</name>
</gene>
<protein>
    <recommendedName>
        <fullName evidence="1">Shikimate dehydrogenase (NADP(+))</fullName>
        <shortName evidence="1">SDH</shortName>
        <ecNumber evidence="1">1.1.1.25</ecNumber>
    </recommendedName>
</protein>
<proteinExistence type="inferred from homology"/>